<organism>
    <name type="scientific">Photobacterium profundum (strain SS9)</name>
    <dbReference type="NCBI Taxonomy" id="298386"/>
    <lineage>
        <taxon>Bacteria</taxon>
        <taxon>Pseudomonadati</taxon>
        <taxon>Pseudomonadota</taxon>
        <taxon>Gammaproteobacteria</taxon>
        <taxon>Vibrionales</taxon>
        <taxon>Vibrionaceae</taxon>
        <taxon>Photobacterium</taxon>
    </lineage>
</organism>
<feature type="chain" id="PRO_0000196685" description="Putative phosphoenolpyruvate synthase regulatory protein">
    <location>
        <begin position="1"/>
        <end position="277"/>
    </location>
</feature>
<feature type="binding site" evidence="1">
    <location>
        <begin position="157"/>
        <end position="164"/>
    </location>
    <ligand>
        <name>ADP</name>
        <dbReference type="ChEBI" id="CHEBI:456216"/>
    </ligand>
</feature>
<proteinExistence type="inferred from homology"/>
<keyword id="KW-0418">Kinase</keyword>
<keyword id="KW-0547">Nucleotide-binding</keyword>
<keyword id="KW-1185">Reference proteome</keyword>
<keyword id="KW-0723">Serine/threonine-protein kinase</keyword>
<keyword id="KW-0808">Transferase</keyword>
<comment type="function">
    <text evidence="1">Bifunctional serine/threonine kinase and phosphorylase involved in the regulation of the phosphoenolpyruvate synthase (PEPS) by catalyzing its phosphorylation/dephosphorylation.</text>
</comment>
<comment type="catalytic activity">
    <reaction evidence="1">
        <text>[pyruvate, water dikinase] + ADP = [pyruvate, water dikinase]-phosphate + AMP + H(+)</text>
        <dbReference type="Rhea" id="RHEA:46020"/>
        <dbReference type="Rhea" id="RHEA-COMP:11425"/>
        <dbReference type="Rhea" id="RHEA-COMP:11426"/>
        <dbReference type="ChEBI" id="CHEBI:15378"/>
        <dbReference type="ChEBI" id="CHEBI:43176"/>
        <dbReference type="ChEBI" id="CHEBI:68546"/>
        <dbReference type="ChEBI" id="CHEBI:456215"/>
        <dbReference type="ChEBI" id="CHEBI:456216"/>
        <dbReference type="EC" id="2.7.11.33"/>
    </reaction>
</comment>
<comment type="catalytic activity">
    <reaction evidence="1">
        <text>[pyruvate, water dikinase]-phosphate + phosphate + H(+) = [pyruvate, water dikinase] + diphosphate</text>
        <dbReference type="Rhea" id="RHEA:48580"/>
        <dbReference type="Rhea" id="RHEA-COMP:11425"/>
        <dbReference type="Rhea" id="RHEA-COMP:11426"/>
        <dbReference type="ChEBI" id="CHEBI:15378"/>
        <dbReference type="ChEBI" id="CHEBI:33019"/>
        <dbReference type="ChEBI" id="CHEBI:43176"/>
        <dbReference type="ChEBI" id="CHEBI:43474"/>
        <dbReference type="ChEBI" id="CHEBI:68546"/>
        <dbReference type="EC" id="2.7.4.28"/>
    </reaction>
</comment>
<comment type="similarity">
    <text evidence="1">Belongs to the pyruvate, phosphate/water dikinase regulatory protein family. PSRP subfamily.</text>
</comment>
<gene>
    <name type="ordered locus">PBPRA1750</name>
</gene>
<reference key="1">
    <citation type="journal article" date="2005" name="Science">
        <title>Life at depth: Photobacterium profundum genome sequence and expression analysis.</title>
        <authorList>
            <person name="Vezzi A."/>
            <person name="Campanaro S."/>
            <person name="D'Angelo M."/>
            <person name="Simonato F."/>
            <person name="Vitulo N."/>
            <person name="Lauro F.M."/>
            <person name="Cestaro A."/>
            <person name="Malacrida G."/>
            <person name="Simionati B."/>
            <person name="Cannata N."/>
            <person name="Romualdi C."/>
            <person name="Bartlett D.H."/>
            <person name="Valle G."/>
        </authorList>
    </citation>
    <scope>NUCLEOTIDE SEQUENCE [LARGE SCALE GENOMIC DNA]</scope>
    <source>
        <strain>ATCC BAA-1253 / SS9</strain>
    </source>
</reference>
<dbReference type="EC" id="2.7.11.33" evidence="1"/>
<dbReference type="EC" id="2.7.4.28" evidence="1"/>
<dbReference type="EMBL" id="CR378668">
    <property type="protein sequence ID" value="CAG20157.1"/>
    <property type="molecule type" value="Genomic_DNA"/>
</dbReference>
<dbReference type="RefSeq" id="WP_011218466.1">
    <property type="nucleotide sequence ID" value="NC_006370.1"/>
</dbReference>
<dbReference type="SMR" id="Q6LRB9"/>
<dbReference type="STRING" id="298386.PBPRA1750"/>
<dbReference type="KEGG" id="ppr:PBPRA1750"/>
<dbReference type="eggNOG" id="COG1806">
    <property type="taxonomic scope" value="Bacteria"/>
</dbReference>
<dbReference type="HOGENOM" id="CLU_046206_1_0_6"/>
<dbReference type="Proteomes" id="UP000000593">
    <property type="component" value="Chromosome 1"/>
</dbReference>
<dbReference type="GO" id="GO:0043531">
    <property type="term" value="F:ADP binding"/>
    <property type="evidence" value="ECO:0007669"/>
    <property type="project" value="UniProtKB-UniRule"/>
</dbReference>
<dbReference type="GO" id="GO:0005524">
    <property type="term" value="F:ATP binding"/>
    <property type="evidence" value="ECO:0007669"/>
    <property type="project" value="InterPro"/>
</dbReference>
<dbReference type="GO" id="GO:0016776">
    <property type="term" value="F:phosphotransferase activity, phosphate group as acceptor"/>
    <property type="evidence" value="ECO:0007669"/>
    <property type="project" value="UniProtKB-UniRule"/>
</dbReference>
<dbReference type="GO" id="GO:0004674">
    <property type="term" value="F:protein serine/threonine kinase activity"/>
    <property type="evidence" value="ECO:0007669"/>
    <property type="project" value="UniProtKB-UniRule"/>
</dbReference>
<dbReference type="HAMAP" id="MF_01062">
    <property type="entry name" value="PSRP"/>
    <property type="match status" value="1"/>
</dbReference>
<dbReference type="InterPro" id="IPR005177">
    <property type="entry name" value="Kinase-pyrophosphorylase"/>
</dbReference>
<dbReference type="InterPro" id="IPR026530">
    <property type="entry name" value="PSRP"/>
</dbReference>
<dbReference type="NCBIfam" id="NF003742">
    <property type="entry name" value="PRK05339.1"/>
    <property type="match status" value="1"/>
</dbReference>
<dbReference type="PANTHER" id="PTHR31756">
    <property type="entry name" value="PYRUVATE, PHOSPHATE DIKINASE REGULATORY PROTEIN 1, CHLOROPLASTIC"/>
    <property type="match status" value="1"/>
</dbReference>
<dbReference type="PANTHER" id="PTHR31756:SF3">
    <property type="entry name" value="PYRUVATE, PHOSPHATE DIKINASE REGULATORY PROTEIN 1, CHLOROPLASTIC"/>
    <property type="match status" value="1"/>
</dbReference>
<dbReference type="Pfam" id="PF03618">
    <property type="entry name" value="Kinase-PPPase"/>
    <property type="match status" value="1"/>
</dbReference>
<name>PSRP_PHOPR</name>
<evidence type="ECO:0000255" key="1">
    <source>
        <dbReference type="HAMAP-Rule" id="MF_01062"/>
    </source>
</evidence>
<sequence length="277" mass="31398">MQRKSNFRDVFYVSDGTAITSETLGHAVLGQFPIEIHQTTHPFIETNERAKQVKTLVNQSHEKTGIKPLVFYSIVIPDVKVIIEQSNAHFYDVLNVLVEPLKHDLQLEPEPQLQRSHSINKDAASYQDRIAAIEYTLAHDDGISLNNLDQADVILLGVSRCGKTPTSLYLAMQFGIRAVNYPFIAEDMASLKLPAAIEPYRFKTYGLTIDIERLVAIRNERYANSDYASLEQCEKELHKVEGMFRREAIPYLNTSSLSVEEIATRLLDISGLKRKMC</sequence>
<protein>
    <recommendedName>
        <fullName evidence="1">Putative phosphoenolpyruvate synthase regulatory protein</fullName>
        <shortName evidence="1">PEP synthase regulatory protein</shortName>
        <shortName evidence="1">PSRP</shortName>
        <ecNumber evidence="1">2.7.11.33</ecNumber>
        <ecNumber evidence="1">2.7.4.28</ecNumber>
    </recommendedName>
    <alternativeName>
        <fullName evidence="1">Pyruvate, water dikinase regulatory protein</fullName>
    </alternativeName>
</protein>
<accession>Q6LRB9</accession>